<reference evidence="6" key="1">
    <citation type="journal article" date="2003" name="Proc. Natl. Acad. Sci. U.S.A.">
        <title>Complete genome sequence and analysis of Wolinella succinogenes.</title>
        <authorList>
            <person name="Baar C."/>
            <person name="Eppinger M."/>
            <person name="Raddatz G."/>
            <person name="Simon J."/>
            <person name="Lanz C."/>
            <person name="Klimmek O."/>
            <person name="Nandakumar R."/>
            <person name="Gross R."/>
            <person name="Rosinus A."/>
            <person name="Keller H."/>
            <person name="Jagtap P."/>
            <person name="Linke B."/>
            <person name="Meyer F."/>
            <person name="Lederer H."/>
            <person name="Schuster S.C."/>
        </authorList>
    </citation>
    <scope>NUCLEOTIDE SEQUENCE [LARGE SCALE GENOMIC DNA]</scope>
    <source>
        <strain evidence="6">ATCC 29543 / DSM 1740 / CCUG 13145 / JCM 31913 / LMG 7466 / NCTC 11488 / FDC 602W</strain>
    </source>
</reference>
<reference evidence="3" key="2">
    <citation type="journal article" date="2015" name="Proc. Natl. Acad. Sci. U.S.A.">
        <title>Panoramic view of a superfamily of phosphatases through substrate profiling.</title>
        <authorList>
            <person name="Huang H."/>
            <person name="Pandya C."/>
            <person name="Liu C."/>
            <person name="Al-Obaidi N.F."/>
            <person name="Wang M."/>
            <person name="Zheng L."/>
            <person name="Toews Keating S."/>
            <person name="Aono M."/>
            <person name="Love J.D."/>
            <person name="Evans B."/>
            <person name="Seidel R.D."/>
            <person name="Hillerich B.S."/>
            <person name="Garforth S.J."/>
            <person name="Almo S.C."/>
            <person name="Mariano P.S."/>
            <person name="Dunaway-Mariano D."/>
            <person name="Allen K.N."/>
            <person name="Farelli J.D."/>
        </authorList>
    </citation>
    <scope>CATALYTIC ACTIVITY</scope>
    <scope>COFACTOR</scope>
    <scope>BIOPHYSICOCHEMICAL PROPERTIES</scope>
</reference>
<gene>
    <name evidence="5" type="primary">SERB</name>
    <name evidence="5" type="ordered locus">WS2081</name>
</gene>
<proteinExistence type="evidence at protein level"/>
<dbReference type="EC" id="3.1.3.3" evidence="2"/>
<dbReference type="EMBL" id="BX571662">
    <property type="protein sequence ID" value="CAE11080.1"/>
    <property type="molecule type" value="Genomic_DNA"/>
</dbReference>
<dbReference type="RefSeq" id="WP_011139862.1">
    <property type="nucleotide sequence ID" value="NC_005090.1"/>
</dbReference>
<dbReference type="SMR" id="Q7M7U5"/>
<dbReference type="STRING" id="273121.WS2081"/>
<dbReference type="KEGG" id="wsu:WS2081"/>
<dbReference type="eggNOG" id="COG0560">
    <property type="taxonomic scope" value="Bacteria"/>
</dbReference>
<dbReference type="HOGENOM" id="CLU_036368_4_3_7"/>
<dbReference type="UniPathway" id="UPA00135">
    <property type="reaction ID" value="UER00198"/>
</dbReference>
<dbReference type="Proteomes" id="UP000000422">
    <property type="component" value="Chromosome"/>
</dbReference>
<dbReference type="GO" id="GO:0005737">
    <property type="term" value="C:cytoplasm"/>
    <property type="evidence" value="ECO:0007669"/>
    <property type="project" value="TreeGrafter"/>
</dbReference>
<dbReference type="GO" id="GO:0036424">
    <property type="term" value="F:L-phosphoserine phosphatase activity"/>
    <property type="evidence" value="ECO:0007669"/>
    <property type="project" value="InterPro"/>
</dbReference>
<dbReference type="GO" id="GO:0000287">
    <property type="term" value="F:magnesium ion binding"/>
    <property type="evidence" value="ECO:0007669"/>
    <property type="project" value="TreeGrafter"/>
</dbReference>
<dbReference type="GO" id="GO:0006564">
    <property type="term" value="P:L-serine biosynthetic process"/>
    <property type="evidence" value="ECO:0007669"/>
    <property type="project" value="UniProtKB-KW"/>
</dbReference>
<dbReference type="CDD" id="cd07500">
    <property type="entry name" value="HAD_PSP"/>
    <property type="match status" value="1"/>
</dbReference>
<dbReference type="Gene3D" id="3.40.50.1000">
    <property type="entry name" value="HAD superfamily/HAD-like"/>
    <property type="match status" value="1"/>
</dbReference>
<dbReference type="InterPro" id="IPR050582">
    <property type="entry name" value="HAD-like_SerB"/>
</dbReference>
<dbReference type="InterPro" id="IPR036412">
    <property type="entry name" value="HAD-like_sf"/>
</dbReference>
<dbReference type="InterPro" id="IPR023214">
    <property type="entry name" value="HAD_sf"/>
</dbReference>
<dbReference type="InterPro" id="IPR004469">
    <property type="entry name" value="PSP"/>
</dbReference>
<dbReference type="NCBIfam" id="TIGR01488">
    <property type="entry name" value="HAD-SF-IB"/>
    <property type="match status" value="1"/>
</dbReference>
<dbReference type="NCBIfam" id="TIGR00338">
    <property type="entry name" value="serB"/>
    <property type="match status" value="1"/>
</dbReference>
<dbReference type="PANTHER" id="PTHR43344">
    <property type="entry name" value="PHOSPHOSERINE PHOSPHATASE"/>
    <property type="match status" value="1"/>
</dbReference>
<dbReference type="PANTHER" id="PTHR43344:SF2">
    <property type="entry name" value="PHOSPHOSERINE PHOSPHATASE"/>
    <property type="match status" value="1"/>
</dbReference>
<dbReference type="Pfam" id="PF00702">
    <property type="entry name" value="Hydrolase"/>
    <property type="match status" value="1"/>
</dbReference>
<dbReference type="SFLD" id="SFLDG01136">
    <property type="entry name" value="C1.6:_Phosphoserine_Phosphatas"/>
    <property type="match status" value="1"/>
</dbReference>
<dbReference type="SFLD" id="SFLDF00029">
    <property type="entry name" value="phosphoserine_phosphatase"/>
    <property type="match status" value="1"/>
</dbReference>
<dbReference type="SUPFAM" id="SSF56784">
    <property type="entry name" value="HAD-like"/>
    <property type="match status" value="1"/>
</dbReference>
<feature type="chain" id="PRO_0000435473" description="Phosphoserine phosphatase" evidence="3">
    <location>
        <begin position="1"/>
        <end position="206"/>
    </location>
</feature>
<feature type="active site" description="Nucleophile" evidence="1">
    <location>
        <position position="7"/>
    </location>
</feature>
<feature type="active site" description="Proton donor" evidence="1">
    <location>
        <position position="9"/>
    </location>
</feature>
<feature type="binding site" evidence="1">
    <location>
        <position position="7"/>
    </location>
    <ligand>
        <name>Mg(2+)</name>
        <dbReference type="ChEBI" id="CHEBI:18420"/>
    </ligand>
</feature>
<feature type="binding site" evidence="1">
    <location>
        <position position="9"/>
    </location>
    <ligand>
        <name>Mg(2+)</name>
        <dbReference type="ChEBI" id="CHEBI:18420"/>
    </ligand>
</feature>
<feature type="binding site" evidence="1">
    <location>
        <position position="16"/>
    </location>
    <ligand>
        <name>substrate</name>
    </ligand>
</feature>
<feature type="binding site" evidence="1">
    <location>
        <position position="52"/>
    </location>
    <ligand>
        <name>substrate</name>
    </ligand>
</feature>
<feature type="binding site" evidence="1">
    <location>
        <begin position="95"/>
        <end position="96"/>
    </location>
    <ligand>
        <name>substrate</name>
    </ligand>
</feature>
<feature type="binding site" evidence="1">
    <location>
        <position position="140"/>
    </location>
    <ligand>
        <name>substrate</name>
    </ligand>
</feature>
<feature type="binding site" evidence="1">
    <location>
        <position position="163"/>
    </location>
    <ligand>
        <name>Mg(2+)</name>
        <dbReference type="ChEBI" id="CHEBI:18420"/>
    </ligand>
</feature>
<feature type="binding site" evidence="1">
    <location>
        <position position="166"/>
    </location>
    <ligand>
        <name>substrate</name>
    </ligand>
</feature>
<comment type="catalytic activity">
    <reaction evidence="2">
        <text>O-phospho-L-serine + H2O = L-serine + phosphate</text>
        <dbReference type="Rhea" id="RHEA:21208"/>
        <dbReference type="ChEBI" id="CHEBI:15377"/>
        <dbReference type="ChEBI" id="CHEBI:33384"/>
        <dbReference type="ChEBI" id="CHEBI:43474"/>
        <dbReference type="ChEBI" id="CHEBI:57524"/>
        <dbReference type="EC" id="3.1.3.3"/>
    </reaction>
</comment>
<comment type="catalytic activity">
    <reaction evidence="2">
        <text>O-phospho-D-serine + H2O = D-serine + phosphate</text>
        <dbReference type="Rhea" id="RHEA:24873"/>
        <dbReference type="ChEBI" id="CHEBI:15377"/>
        <dbReference type="ChEBI" id="CHEBI:35247"/>
        <dbReference type="ChEBI" id="CHEBI:43474"/>
        <dbReference type="ChEBI" id="CHEBI:58680"/>
        <dbReference type="EC" id="3.1.3.3"/>
    </reaction>
</comment>
<comment type="cofactor">
    <cofactor evidence="2">
        <name>Mg(2+)</name>
        <dbReference type="ChEBI" id="CHEBI:18420"/>
    </cofactor>
</comment>
<comment type="biophysicochemical properties">
    <kinetics>
        <KM evidence="2">250 uM for phosphoserine</KM>
    </kinetics>
</comment>
<comment type="pathway">
    <text evidence="3">Amino-acid biosynthesis; L-serine biosynthesis; L-serine from 3-phospho-D-glycerate: step 3/3.</text>
</comment>
<comment type="similarity">
    <text evidence="3">Belongs to the HAD-like hydrolase superfamily. SerB family.</text>
</comment>
<sequence>MKLAVFDFDSTLMDGETIDILAHHYGVGEEVDRITKGAMEGGLDFYESLKRRVALLRGMELSLVEEICANLTLMEGAKELIQELKRRDYKVVVFSGGFKNATSKARETLGLDADFSNILHHKEGKLTGEVGGEMMFGSSKGEMMQTLQRLLGISPELTMAVGDGANDASMFPFAKQRVAFCAKPILREKANIIIEKKDLREILAHL</sequence>
<keyword id="KW-0028">Amino-acid biosynthesis</keyword>
<keyword id="KW-0378">Hydrolase</keyword>
<keyword id="KW-0460">Magnesium</keyword>
<keyword id="KW-0479">Metal-binding</keyword>
<keyword id="KW-1185">Reference proteome</keyword>
<keyword id="KW-0718">Serine biosynthesis</keyword>
<organism evidence="6">
    <name type="scientific">Wolinella succinogenes (strain ATCC 29543 / DSM 1740 / CCUG 13145 / JCM 31913 / LMG 7466 / NCTC 11488 / FDC 602W)</name>
    <name type="common">Vibrio succinogenes</name>
    <dbReference type="NCBI Taxonomy" id="273121"/>
    <lineage>
        <taxon>Bacteria</taxon>
        <taxon>Pseudomonadati</taxon>
        <taxon>Campylobacterota</taxon>
        <taxon>Epsilonproteobacteria</taxon>
        <taxon>Campylobacterales</taxon>
        <taxon>Helicobacteraceae</taxon>
        <taxon>Wolinella</taxon>
    </lineage>
</organism>
<protein>
    <recommendedName>
        <fullName evidence="4">Phosphoserine phosphatase</fullName>
        <shortName evidence="1">PSP</shortName>
        <shortName evidence="1">PSPase</shortName>
        <ecNumber evidence="2">3.1.3.3</ecNumber>
    </recommendedName>
    <alternativeName>
        <fullName evidence="1">O-phosphoserine phosphohydrolase</fullName>
    </alternativeName>
</protein>
<accession>Q7M7U5</accession>
<evidence type="ECO:0000250" key="1">
    <source>
        <dbReference type="UniProtKB" id="Q58989"/>
    </source>
</evidence>
<evidence type="ECO:0000269" key="2">
    <source>
    </source>
</evidence>
<evidence type="ECO:0000305" key="3"/>
<evidence type="ECO:0000305" key="4">
    <source>
    </source>
</evidence>
<evidence type="ECO:0000312" key="5">
    <source>
        <dbReference type="EMBL" id="CAE11080.1"/>
    </source>
</evidence>
<evidence type="ECO:0000312" key="6">
    <source>
        <dbReference type="Proteomes" id="UP000000422"/>
    </source>
</evidence>
<name>SERB_WOLSU</name>